<sequence length="198" mass="22072">MHYPEPISKLIDSFMKLPGIGPKTAVRLAFFVLDMKEDDVLDFAKSLVNAKRNLTYCSVCGHITDRDPCYICDDSHRDQSVVCVVQEPKDVIAMEKMKEYQGVYHVLRGAISPMEGIGPEDINIPQLLKRLQDETVQEVILATNPNIEGEATAMYISRLLKPTGIKVTRIAHGLPVGGDLEYADEVTLSKALEGRREV</sequence>
<proteinExistence type="inferred from homology"/>
<organism>
    <name type="scientific">Bacillus cytotoxicus (strain DSM 22905 / CIP 110041 / 391-98 / NVH 391-98)</name>
    <dbReference type="NCBI Taxonomy" id="315749"/>
    <lineage>
        <taxon>Bacteria</taxon>
        <taxon>Bacillati</taxon>
        <taxon>Bacillota</taxon>
        <taxon>Bacilli</taxon>
        <taxon>Bacillales</taxon>
        <taxon>Bacillaceae</taxon>
        <taxon>Bacillus</taxon>
        <taxon>Bacillus cereus group</taxon>
    </lineage>
</organism>
<name>RECR_BACCN</name>
<protein>
    <recommendedName>
        <fullName evidence="1">Recombination protein RecR</fullName>
    </recommendedName>
</protein>
<evidence type="ECO:0000255" key="1">
    <source>
        <dbReference type="HAMAP-Rule" id="MF_00017"/>
    </source>
</evidence>
<accession>A7GJT7</accession>
<comment type="function">
    <text evidence="1">May play a role in DNA repair. It seems to be involved in an RecBC-independent recombinational process of DNA repair. It may act with RecF and RecO.</text>
</comment>
<comment type="similarity">
    <text evidence="1">Belongs to the RecR family.</text>
</comment>
<reference key="1">
    <citation type="journal article" date="2008" name="Chem. Biol. Interact.">
        <title>Extending the Bacillus cereus group genomics to putative food-borne pathogens of different toxicity.</title>
        <authorList>
            <person name="Lapidus A."/>
            <person name="Goltsman E."/>
            <person name="Auger S."/>
            <person name="Galleron N."/>
            <person name="Segurens B."/>
            <person name="Dossat C."/>
            <person name="Land M.L."/>
            <person name="Broussolle V."/>
            <person name="Brillard J."/>
            <person name="Guinebretiere M.-H."/>
            <person name="Sanchis V."/>
            <person name="Nguen-the C."/>
            <person name="Lereclus D."/>
            <person name="Richardson P."/>
            <person name="Wincker P."/>
            <person name="Weissenbach J."/>
            <person name="Ehrlich S.D."/>
            <person name="Sorokin A."/>
        </authorList>
    </citation>
    <scope>NUCLEOTIDE SEQUENCE [LARGE SCALE GENOMIC DNA]</scope>
    <source>
        <strain>DSM 22905 / CIP 110041 / 391-98 / NVH 391-98</strain>
    </source>
</reference>
<feature type="chain" id="PRO_1000074110" description="Recombination protein RecR">
    <location>
        <begin position="1"/>
        <end position="198"/>
    </location>
</feature>
<feature type="domain" description="Toprim" evidence="1">
    <location>
        <begin position="80"/>
        <end position="175"/>
    </location>
</feature>
<feature type="zinc finger region" description="C4-type" evidence="1">
    <location>
        <begin position="57"/>
        <end position="72"/>
    </location>
</feature>
<keyword id="KW-0227">DNA damage</keyword>
<keyword id="KW-0233">DNA recombination</keyword>
<keyword id="KW-0234">DNA repair</keyword>
<keyword id="KW-0479">Metal-binding</keyword>
<keyword id="KW-0862">Zinc</keyword>
<keyword id="KW-0863">Zinc-finger</keyword>
<dbReference type="EMBL" id="CP000764">
    <property type="protein sequence ID" value="ABS20395.1"/>
    <property type="molecule type" value="Genomic_DNA"/>
</dbReference>
<dbReference type="RefSeq" id="WP_011983166.1">
    <property type="nucleotide sequence ID" value="NC_009674.1"/>
</dbReference>
<dbReference type="SMR" id="A7GJT7"/>
<dbReference type="STRING" id="315749.Bcer98_0020"/>
<dbReference type="GeneID" id="33895319"/>
<dbReference type="KEGG" id="bcy:Bcer98_0020"/>
<dbReference type="eggNOG" id="COG0353">
    <property type="taxonomic scope" value="Bacteria"/>
</dbReference>
<dbReference type="HOGENOM" id="CLU_060739_1_0_9"/>
<dbReference type="OrthoDB" id="9802672at2"/>
<dbReference type="Proteomes" id="UP000002300">
    <property type="component" value="Chromosome"/>
</dbReference>
<dbReference type="GO" id="GO:0003677">
    <property type="term" value="F:DNA binding"/>
    <property type="evidence" value="ECO:0007669"/>
    <property type="project" value="UniProtKB-UniRule"/>
</dbReference>
<dbReference type="GO" id="GO:0008270">
    <property type="term" value="F:zinc ion binding"/>
    <property type="evidence" value="ECO:0007669"/>
    <property type="project" value="UniProtKB-KW"/>
</dbReference>
<dbReference type="GO" id="GO:0006310">
    <property type="term" value="P:DNA recombination"/>
    <property type="evidence" value="ECO:0007669"/>
    <property type="project" value="UniProtKB-UniRule"/>
</dbReference>
<dbReference type="GO" id="GO:0006281">
    <property type="term" value="P:DNA repair"/>
    <property type="evidence" value="ECO:0007669"/>
    <property type="project" value="UniProtKB-UniRule"/>
</dbReference>
<dbReference type="CDD" id="cd01025">
    <property type="entry name" value="TOPRIM_recR"/>
    <property type="match status" value="1"/>
</dbReference>
<dbReference type="Gene3D" id="3.30.60.80">
    <property type="match status" value="1"/>
</dbReference>
<dbReference type="Gene3D" id="3.40.1360.10">
    <property type="match status" value="1"/>
</dbReference>
<dbReference type="Gene3D" id="6.10.250.240">
    <property type="match status" value="1"/>
</dbReference>
<dbReference type="Gene3D" id="1.10.8.420">
    <property type="entry name" value="RecR Domain 1"/>
    <property type="match status" value="1"/>
</dbReference>
<dbReference type="HAMAP" id="MF_00017">
    <property type="entry name" value="RecR"/>
    <property type="match status" value="1"/>
</dbReference>
<dbReference type="InterPro" id="IPR000093">
    <property type="entry name" value="DNA_Rcmb_RecR"/>
</dbReference>
<dbReference type="InterPro" id="IPR023627">
    <property type="entry name" value="Rcmb_RecR"/>
</dbReference>
<dbReference type="InterPro" id="IPR015967">
    <property type="entry name" value="Rcmb_RecR_Znf"/>
</dbReference>
<dbReference type="InterPro" id="IPR006171">
    <property type="entry name" value="TOPRIM_dom"/>
</dbReference>
<dbReference type="InterPro" id="IPR034137">
    <property type="entry name" value="TOPRIM_RecR"/>
</dbReference>
<dbReference type="NCBIfam" id="TIGR00615">
    <property type="entry name" value="recR"/>
    <property type="match status" value="1"/>
</dbReference>
<dbReference type="PANTHER" id="PTHR30446">
    <property type="entry name" value="RECOMBINATION PROTEIN RECR"/>
    <property type="match status" value="1"/>
</dbReference>
<dbReference type="PANTHER" id="PTHR30446:SF0">
    <property type="entry name" value="RECOMBINATION PROTEIN RECR"/>
    <property type="match status" value="1"/>
</dbReference>
<dbReference type="Pfam" id="PF21175">
    <property type="entry name" value="RecR_C"/>
    <property type="match status" value="1"/>
</dbReference>
<dbReference type="Pfam" id="PF21176">
    <property type="entry name" value="RecR_HhH"/>
    <property type="match status" value="1"/>
</dbReference>
<dbReference type="Pfam" id="PF02132">
    <property type="entry name" value="RecR_ZnF"/>
    <property type="match status" value="1"/>
</dbReference>
<dbReference type="Pfam" id="PF13662">
    <property type="entry name" value="Toprim_4"/>
    <property type="match status" value="1"/>
</dbReference>
<dbReference type="SMART" id="SM00493">
    <property type="entry name" value="TOPRIM"/>
    <property type="match status" value="1"/>
</dbReference>
<dbReference type="SUPFAM" id="SSF111304">
    <property type="entry name" value="Recombination protein RecR"/>
    <property type="match status" value="1"/>
</dbReference>
<dbReference type="PROSITE" id="PS01300">
    <property type="entry name" value="RECR"/>
    <property type="match status" value="1"/>
</dbReference>
<dbReference type="PROSITE" id="PS50880">
    <property type="entry name" value="TOPRIM"/>
    <property type="match status" value="1"/>
</dbReference>
<gene>
    <name evidence="1" type="primary">recR</name>
    <name type="ordered locus">Bcer98_0020</name>
</gene>